<keyword id="KW-1185">Reference proteome</keyword>
<keyword id="KW-0687">Ribonucleoprotein</keyword>
<keyword id="KW-0689">Ribosomal protein</keyword>
<keyword id="KW-0694">RNA-binding</keyword>
<keyword id="KW-0699">rRNA-binding</keyword>
<feature type="chain" id="PRO_1000052913" description="Large ribosomal subunit protein bL25">
    <location>
        <begin position="1"/>
        <end position="208"/>
    </location>
</feature>
<proteinExistence type="inferred from homology"/>
<comment type="function">
    <text evidence="1">This is one of the proteins that binds to the 5S RNA in the ribosome where it forms part of the central protuberance.</text>
</comment>
<comment type="subunit">
    <text evidence="1">Part of the 50S ribosomal subunit; part of the 5S rRNA/L5/L18/L25 subcomplex. Contacts the 5S rRNA. Binds to the 5S rRNA independently of L5 and L18.</text>
</comment>
<comment type="similarity">
    <text evidence="1">Belongs to the bacterial ribosomal protein bL25 family. CTC subfamily.</text>
</comment>
<accession>A1B9E9</accession>
<organism>
    <name type="scientific">Paracoccus denitrificans (strain Pd 1222)</name>
    <dbReference type="NCBI Taxonomy" id="318586"/>
    <lineage>
        <taxon>Bacteria</taxon>
        <taxon>Pseudomonadati</taxon>
        <taxon>Pseudomonadota</taxon>
        <taxon>Alphaproteobacteria</taxon>
        <taxon>Rhodobacterales</taxon>
        <taxon>Paracoccaceae</taxon>
        <taxon>Paracoccus</taxon>
    </lineage>
</organism>
<protein>
    <recommendedName>
        <fullName evidence="1">Large ribosomal subunit protein bL25</fullName>
    </recommendedName>
    <alternativeName>
        <fullName evidence="2">50S ribosomal protein L25</fullName>
    </alternativeName>
    <alternativeName>
        <fullName evidence="1">General stress protein CTC</fullName>
    </alternativeName>
</protein>
<dbReference type="EMBL" id="CP000490">
    <property type="protein sequence ID" value="ABL72143.1"/>
    <property type="molecule type" value="Genomic_DNA"/>
</dbReference>
<dbReference type="RefSeq" id="WP_011750311.1">
    <property type="nucleotide sequence ID" value="NC_008687.1"/>
</dbReference>
<dbReference type="SMR" id="A1B9E9"/>
<dbReference type="STRING" id="318586.Pden_4077"/>
<dbReference type="EnsemblBacteria" id="ABL72143">
    <property type="protein sequence ID" value="ABL72143"/>
    <property type="gene ID" value="Pden_4077"/>
</dbReference>
<dbReference type="GeneID" id="93453742"/>
<dbReference type="KEGG" id="pde:Pden_4077"/>
<dbReference type="eggNOG" id="COG1825">
    <property type="taxonomic scope" value="Bacteria"/>
</dbReference>
<dbReference type="HOGENOM" id="CLU_075939_0_0_5"/>
<dbReference type="OrthoDB" id="9806411at2"/>
<dbReference type="Proteomes" id="UP000000361">
    <property type="component" value="Chromosome 2"/>
</dbReference>
<dbReference type="GO" id="GO:0022625">
    <property type="term" value="C:cytosolic large ribosomal subunit"/>
    <property type="evidence" value="ECO:0007669"/>
    <property type="project" value="TreeGrafter"/>
</dbReference>
<dbReference type="GO" id="GO:0008097">
    <property type="term" value="F:5S rRNA binding"/>
    <property type="evidence" value="ECO:0007669"/>
    <property type="project" value="InterPro"/>
</dbReference>
<dbReference type="GO" id="GO:0003735">
    <property type="term" value="F:structural constituent of ribosome"/>
    <property type="evidence" value="ECO:0007669"/>
    <property type="project" value="InterPro"/>
</dbReference>
<dbReference type="GO" id="GO:0006412">
    <property type="term" value="P:translation"/>
    <property type="evidence" value="ECO:0007669"/>
    <property type="project" value="UniProtKB-UniRule"/>
</dbReference>
<dbReference type="CDD" id="cd00495">
    <property type="entry name" value="Ribosomal_L25_TL5_CTC"/>
    <property type="match status" value="1"/>
</dbReference>
<dbReference type="Gene3D" id="2.170.120.20">
    <property type="entry name" value="Ribosomal protein L25, beta domain"/>
    <property type="match status" value="1"/>
</dbReference>
<dbReference type="Gene3D" id="2.40.240.10">
    <property type="entry name" value="Ribosomal Protein L25, Chain P"/>
    <property type="match status" value="1"/>
</dbReference>
<dbReference type="HAMAP" id="MF_01334">
    <property type="entry name" value="Ribosomal_bL25_CTC"/>
    <property type="match status" value="1"/>
</dbReference>
<dbReference type="InterPro" id="IPR020056">
    <property type="entry name" value="Rbsml_bL25/Gln-tRNA_synth_N"/>
</dbReference>
<dbReference type="InterPro" id="IPR011035">
    <property type="entry name" value="Ribosomal_bL25/Gln-tRNA_synth"/>
</dbReference>
<dbReference type="InterPro" id="IPR020057">
    <property type="entry name" value="Ribosomal_bL25_b-dom"/>
</dbReference>
<dbReference type="InterPro" id="IPR037121">
    <property type="entry name" value="Ribosomal_bL25_C"/>
</dbReference>
<dbReference type="InterPro" id="IPR001021">
    <property type="entry name" value="Ribosomal_bL25_long"/>
</dbReference>
<dbReference type="InterPro" id="IPR029751">
    <property type="entry name" value="Ribosomal_L25_dom"/>
</dbReference>
<dbReference type="InterPro" id="IPR020930">
    <property type="entry name" value="Ribosomal_uL5_bac-type"/>
</dbReference>
<dbReference type="NCBIfam" id="TIGR00731">
    <property type="entry name" value="bL25_bact_ctc"/>
    <property type="match status" value="1"/>
</dbReference>
<dbReference type="NCBIfam" id="NF004128">
    <property type="entry name" value="PRK05618.1-2"/>
    <property type="match status" value="1"/>
</dbReference>
<dbReference type="PANTHER" id="PTHR33284">
    <property type="entry name" value="RIBOSOMAL PROTEIN L25/GLN-TRNA SYNTHETASE, ANTI-CODON-BINDING DOMAIN-CONTAINING PROTEIN"/>
    <property type="match status" value="1"/>
</dbReference>
<dbReference type="PANTHER" id="PTHR33284:SF1">
    <property type="entry name" value="RIBOSOMAL PROTEIN L25_GLN-TRNA SYNTHETASE, ANTI-CODON-BINDING DOMAIN-CONTAINING PROTEIN"/>
    <property type="match status" value="1"/>
</dbReference>
<dbReference type="Pfam" id="PF01386">
    <property type="entry name" value="Ribosomal_L25p"/>
    <property type="match status" value="1"/>
</dbReference>
<dbReference type="Pfam" id="PF14693">
    <property type="entry name" value="Ribosomal_TL5_C"/>
    <property type="match status" value="1"/>
</dbReference>
<dbReference type="SUPFAM" id="SSF50715">
    <property type="entry name" value="Ribosomal protein L25-like"/>
    <property type="match status" value="1"/>
</dbReference>
<evidence type="ECO:0000255" key="1">
    <source>
        <dbReference type="HAMAP-Rule" id="MF_01334"/>
    </source>
</evidence>
<evidence type="ECO:0000305" key="2"/>
<name>RL25_PARDP</name>
<reference key="1">
    <citation type="submission" date="2006-12" db="EMBL/GenBank/DDBJ databases">
        <title>Complete sequence of chromosome 2 of Paracoccus denitrificans PD1222.</title>
        <authorList>
            <person name="Copeland A."/>
            <person name="Lucas S."/>
            <person name="Lapidus A."/>
            <person name="Barry K."/>
            <person name="Detter J.C."/>
            <person name="Glavina del Rio T."/>
            <person name="Hammon N."/>
            <person name="Israni S."/>
            <person name="Dalin E."/>
            <person name="Tice H."/>
            <person name="Pitluck S."/>
            <person name="Munk A.C."/>
            <person name="Brettin T."/>
            <person name="Bruce D."/>
            <person name="Han C."/>
            <person name="Tapia R."/>
            <person name="Gilna P."/>
            <person name="Schmutz J."/>
            <person name="Larimer F."/>
            <person name="Land M."/>
            <person name="Hauser L."/>
            <person name="Kyrpides N."/>
            <person name="Lykidis A."/>
            <person name="Spiro S."/>
            <person name="Richardson D.J."/>
            <person name="Moir J.W.B."/>
            <person name="Ferguson S.J."/>
            <person name="van Spanning R.J.M."/>
            <person name="Richardson P."/>
        </authorList>
    </citation>
    <scope>NUCLEOTIDE SEQUENCE [LARGE SCALE GENOMIC DNA]</scope>
    <source>
        <strain>Pd 1222</strain>
    </source>
</reference>
<gene>
    <name evidence="1" type="primary">rplY</name>
    <name evidence="1" type="synonym">ctc</name>
    <name type="ordered locus">Pden_4077</name>
</gene>
<sequence>MAKEIPDLVAEARAGTGKGAARQARREGKVPGIVYGDGKEPQPIQIEFNSLLTKLRAGRFMSTLWNLKVEGQDDVRVVCRGVQRDVVKDLPTHIDFMRLHRNTRVNLFIHVNFENQDEAPGLKRGGTLVVVRPEVELVVTASDIPEQITVDLTGKQIGDTIHINDVVLPKGVKPTIDRNFVIANIAAPSGLRSADNEEAAAESEATEA</sequence>